<feature type="chain" id="PRO_0000248130" description="Nucleoside triphosphate/diphosphate phosphatase">
    <location>
        <begin position="1"/>
        <end position="177"/>
    </location>
</feature>
<feature type="active site" description="Proton donor" evidence="1">
    <location>
        <position position="23"/>
    </location>
</feature>
<feature type="binding site" evidence="1">
    <location>
        <position position="87"/>
    </location>
    <ligand>
        <name>Mg(2+)</name>
        <dbReference type="ChEBI" id="CHEBI:18420"/>
        <label>1</label>
    </ligand>
</feature>
<feature type="binding site" evidence="1">
    <location>
        <position position="103"/>
    </location>
    <ligand>
        <name>Mg(2+)</name>
        <dbReference type="ChEBI" id="CHEBI:18420"/>
        <label>1</label>
    </ligand>
</feature>
<feature type="binding site" evidence="1">
    <location>
        <position position="105"/>
    </location>
    <ligand>
        <name>Mg(2+)</name>
        <dbReference type="ChEBI" id="CHEBI:18420"/>
        <label>2</label>
    </ligand>
</feature>
<feature type="binding site" evidence="1">
    <location>
        <position position="107"/>
    </location>
    <ligand>
        <name>Mg(2+)</name>
        <dbReference type="ChEBI" id="CHEBI:18420"/>
        <label>1</label>
    </ligand>
</feature>
<feature type="binding site" evidence="1">
    <location>
        <position position="107"/>
    </location>
    <ligand>
        <name>Mg(2+)</name>
        <dbReference type="ChEBI" id="CHEBI:18420"/>
        <label>2</label>
    </ligand>
</feature>
<feature type="binding site" evidence="1">
    <location>
        <position position="120"/>
    </location>
    <ligand>
        <name>Mg(2+)</name>
        <dbReference type="ChEBI" id="CHEBI:18420"/>
        <label>2</label>
    </ligand>
</feature>
<feature type="binding site" evidence="1">
    <location>
        <position position="123"/>
    </location>
    <ligand>
        <name>Mg(2+)</name>
        <dbReference type="ChEBI" id="CHEBI:18420"/>
        <label>2</label>
    </ligand>
</feature>
<protein>
    <recommendedName>
        <fullName evidence="1">Nucleoside triphosphate/diphosphate phosphatase</fullName>
        <ecNumber evidence="1">3.6.1.15</ecNumber>
        <ecNumber evidence="1">3.6.1.6</ecNumber>
    </recommendedName>
</protein>
<name>NTDP_STRPN</name>
<reference key="1">
    <citation type="journal article" date="2001" name="Science">
        <title>Complete genome sequence of a virulent isolate of Streptococcus pneumoniae.</title>
        <authorList>
            <person name="Tettelin H."/>
            <person name="Nelson K.E."/>
            <person name="Paulsen I.T."/>
            <person name="Eisen J.A."/>
            <person name="Read T.D."/>
            <person name="Peterson S.N."/>
            <person name="Heidelberg J.F."/>
            <person name="DeBoy R.T."/>
            <person name="Haft D.H."/>
            <person name="Dodson R.J."/>
            <person name="Durkin A.S."/>
            <person name="Gwinn M.L."/>
            <person name="Kolonay J.F."/>
            <person name="Nelson W.C."/>
            <person name="Peterson J.D."/>
            <person name="Umayam L.A."/>
            <person name="White O."/>
            <person name="Salzberg S.L."/>
            <person name="Lewis M.R."/>
            <person name="Radune D."/>
            <person name="Holtzapple E.K."/>
            <person name="Khouri H.M."/>
            <person name="Wolf A.M."/>
            <person name="Utterback T.R."/>
            <person name="Hansen C.L."/>
            <person name="McDonald L.A."/>
            <person name="Feldblyum T.V."/>
            <person name="Angiuoli S.V."/>
            <person name="Dickinson T."/>
            <person name="Hickey E.K."/>
            <person name="Holt I.E."/>
            <person name="Loftus B.J."/>
            <person name="Yang F."/>
            <person name="Smith H.O."/>
            <person name="Venter J.C."/>
            <person name="Dougherty B.A."/>
            <person name="Morrison D.A."/>
            <person name="Hollingshead S.K."/>
            <person name="Fraser C.M."/>
        </authorList>
    </citation>
    <scope>NUCLEOTIDE SEQUENCE [LARGE SCALE GENOMIC DNA]</scope>
    <source>
        <strain>ATCC BAA-334 / TIGR4</strain>
    </source>
</reference>
<sequence length="177" mass="21338">MKLPKEGDFITIQSYKHDGSLHRTWRDTMVLKTTENAIIGVNDHTLVTESDGRRWVTREPAIVYFHKKYWFNIIAMIRDNGTSYYCNMASPYYLDEEALKYIDYDLDVKIFTDGEKRLLDVEEYERHKRKMNYSDDLDYILKEHVKILVDWINNGRGPFSEAYVNIWYKRYVELKNR</sequence>
<proteinExistence type="evidence at protein level"/>
<keyword id="KW-0378">Hydrolase</keyword>
<keyword id="KW-0460">Magnesium</keyword>
<keyword id="KW-0479">Metal-binding</keyword>
<keyword id="KW-1185">Reference proteome</keyword>
<dbReference type="EC" id="3.6.1.15" evidence="1"/>
<dbReference type="EC" id="3.6.1.6" evidence="1"/>
<dbReference type="EMBL" id="AE005672">
    <property type="protein sequence ID" value="AAK75974.1"/>
    <property type="molecule type" value="Genomic_DNA"/>
</dbReference>
<dbReference type="PIR" id="E95222">
    <property type="entry name" value="E95222"/>
</dbReference>
<dbReference type="RefSeq" id="WP_000775321.1">
    <property type="nucleotide sequence ID" value="NZ_CP155539.1"/>
</dbReference>
<dbReference type="SMR" id="Q97NV6"/>
<dbReference type="IntAct" id="Q97NV6">
    <property type="interactions" value="1"/>
</dbReference>
<dbReference type="PaxDb" id="170187-SP_1903"/>
<dbReference type="EnsemblBacteria" id="AAK75974">
    <property type="protein sequence ID" value="AAK75974"/>
    <property type="gene ID" value="SP_1903"/>
</dbReference>
<dbReference type="KEGG" id="spn:SP_1903"/>
<dbReference type="eggNOG" id="COG3557">
    <property type="taxonomic scope" value="Bacteria"/>
</dbReference>
<dbReference type="PhylomeDB" id="Q97NV6"/>
<dbReference type="BioCyc" id="SPNE170187:G1FZB-1956-MONOMER"/>
<dbReference type="Proteomes" id="UP000000585">
    <property type="component" value="Chromosome"/>
</dbReference>
<dbReference type="GO" id="GO:0000287">
    <property type="term" value="F:magnesium ion binding"/>
    <property type="evidence" value="ECO:0007669"/>
    <property type="project" value="UniProtKB-UniRule"/>
</dbReference>
<dbReference type="GO" id="GO:0017110">
    <property type="term" value="F:nucleoside diphosphate phosphatase activity"/>
    <property type="evidence" value="ECO:0007669"/>
    <property type="project" value="UniProtKB-UniRule"/>
</dbReference>
<dbReference type="GO" id="GO:0017111">
    <property type="term" value="F:ribonucleoside triphosphate phosphatase activity"/>
    <property type="evidence" value="ECO:0007669"/>
    <property type="project" value="UniProtKB-UniRule"/>
</dbReference>
<dbReference type="Gene3D" id="2.40.380.10">
    <property type="entry name" value="FomD-like"/>
    <property type="match status" value="1"/>
</dbReference>
<dbReference type="HAMAP" id="MF_01568">
    <property type="entry name" value="Ntdp"/>
    <property type="match status" value="1"/>
</dbReference>
<dbReference type="InterPro" id="IPR007295">
    <property type="entry name" value="DUF402"/>
</dbReference>
<dbReference type="InterPro" id="IPR035930">
    <property type="entry name" value="FomD-like_sf"/>
</dbReference>
<dbReference type="InterPro" id="IPR050212">
    <property type="entry name" value="Ntdp-like"/>
</dbReference>
<dbReference type="InterPro" id="IPR016882">
    <property type="entry name" value="SA1684"/>
</dbReference>
<dbReference type="NCBIfam" id="NF010183">
    <property type="entry name" value="PRK13662.1"/>
    <property type="match status" value="1"/>
</dbReference>
<dbReference type="PANTHER" id="PTHR39159">
    <property type="match status" value="1"/>
</dbReference>
<dbReference type="PANTHER" id="PTHR39159:SF1">
    <property type="entry name" value="UPF0374 PROTEIN YGAC"/>
    <property type="match status" value="1"/>
</dbReference>
<dbReference type="Pfam" id="PF04167">
    <property type="entry name" value="DUF402"/>
    <property type="match status" value="1"/>
</dbReference>
<dbReference type="PIRSF" id="PIRSF028345">
    <property type="entry name" value="UCP028345"/>
    <property type="match status" value="1"/>
</dbReference>
<dbReference type="SUPFAM" id="SSF159234">
    <property type="entry name" value="FomD-like"/>
    <property type="match status" value="1"/>
</dbReference>
<gene>
    <name type="ordered locus">SP_1903</name>
</gene>
<organism>
    <name type="scientific">Streptococcus pneumoniae serotype 4 (strain ATCC BAA-334 / TIGR4)</name>
    <dbReference type="NCBI Taxonomy" id="170187"/>
    <lineage>
        <taxon>Bacteria</taxon>
        <taxon>Bacillati</taxon>
        <taxon>Bacillota</taxon>
        <taxon>Bacilli</taxon>
        <taxon>Lactobacillales</taxon>
        <taxon>Streptococcaceae</taxon>
        <taxon>Streptococcus</taxon>
    </lineage>
</organism>
<accession>Q97NV6</accession>
<comment type="function">
    <text evidence="1">Has nucleoside phosphatase activity towards nucleoside triphosphates and nucleoside diphosphates.</text>
</comment>
<comment type="catalytic activity">
    <reaction evidence="1">
        <text>a ribonucleoside 5'-triphosphate + H2O = a ribonucleoside 5'-diphosphate + phosphate + H(+)</text>
        <dbReference type="Rhea" id="RHEA:23680"/>
        <dbReference type="ChEBI" id="CHEBI:15377"/>
        <dbReference type="ChEBI" id="CHEBI:15378"/>
        <dbReference type="ChEBI" id="CHEBI:43474"/>
        <dbReference type="ChEBI" id="CHEBI:57930"/>
        <dbReference type="ChEBI" id="CHEBI:61557"/>
        <dbReference type="EC" id="3.6.1.15"/>
    </reaction>
</comment>
<comment type="catalytic activity">
    <reaction evidence="1">
        <text>a ribonucleoside 5'-diphosphate + H2O = a ribonucleoside 5'-phosphate + phosphate + H(+)</text>
        <dbReference type="Rhea" id="RHEA:36799"/>
        <dbReference type="ChEBI" id="CHEBI:15377"/>
        <dbReference type="ChEBI" id="CHEBI:15378"/>
        <dbReference type="ChEBI" id="CHEBI:43474"/>
        <dbReference type="ChEBI" id="CHEBI:57930"/>
        <dbReference type="ChEBI" id="CHEBI:58043"/>
        <dbReference type="EC" id="3.6.1.6"/>
    </reaction>
</comment>
<comment type="cofactor">
    <cofactor evidence="1">
        <name>Mg(2+)</name>
        <dbReference type="ChEBI" id="CHEBI:18420"/>
    </cofactor>
</comment>
<comment type="interaction">
    <interactant intactId="EBI-6473650">
        <id>Q97NV6</id>
    </interactant>
    <interactant intactId="EBI-6473653">
        <id>A0A0H2UQC2</id>
        <label>ffh</label>
    </interactant>
    <organismsDiffer>false</organismsDiffer>
    <experiments>4</experiments>
</comment>
<comment type="similarity">
    <text evidence="1">Belongs to the Ntdp family.</text>
</comment>
<evidence type="ECO:0000255" key="1">
    <source>
        <dbReference type="HAMAP-Rule" id="MF_01568"/>
    </source>
</evidence>